<organism>
    <name type="scientific">Escherichia coli O157:H7 (strain EC4115 / EHEC)</name>
    <dbReference type="NCBI Taxonomy" id="444450"/>
    <lineage>
        <taxon>Bacteria</taxon>
        <taxon>Pseudomonadati</taxon>
        <taxon>Pseudomonadota</taxon>
        <taxon>Gammaproteobacteria</taxon>
        <taxon>Enterobacterales</taxon>
        <taxon>Enterobacteriaceae</taxon>
        <taxon>Escherichia</taxon>
    </lineage>
</organism>
<evidence type="ECO:0000255" key="1">
    <source>
        <dbReference type="HAMAP-Rule" id="MF_00514"/>
    </source>
</evidence>
<evidence type="ECO:0000256" key="2">
    <source>
        <dbReference type="SAM" id="MobiDB-lite"/>
    </source>
</evidence>
<evidence type="ECO:0000305" key="3"/>
<protein>
    <recommendedName>
        <fullName evidence="1">Large ribosomal subunit protein bL35</fullName>
    </recommendedName>
    <alternativeName>
        <fullName evidence="3">50S ribosomal protein L35</fullName>
    </alternativeName>
</protein>
<dbReference type="EMBL" id="CP001164">
    <property type="protein sequence ID" value="ACI36620.1"/>
    <property type="molecule type" value="Genomic_DNA"/>
</dbReference>
<dbReference type="RefSeq" id="WP_001124225.1">
    <property type="nucleotide sequence ID" value="NC_011353.1"/>
</dbReference>
<dbReference type="SMR" id="B5YQ05"/>
<dbReference type="GeneID" id="97601348"/>
<dbReference type="KEGG" id="ecf:ECH74115_2435"/>
<dbReference type="HOGENOM" id="CLU_169643_1_1_6"/>
<dbReference type="GO" id="GO:0022625">
    <property type="term" value="C:cytosolic large ribosomal subunit"/>
    <property type="evidence" value="ECO:0007669"/>
    <property type="project" value="TreeGrafter"/>
</dbReference>
<dbReference type="GO" id="GO:0003735">
    <property type="term" value="F:structural constituent of ribosome"/>
    <property type="evidence" value="ECO:0007669"/>
    <property type="project" value="InterPro"/>
</dbReference>
<dbReference type="GO" id="GO:0006412">
    <property type="term" value="P:translation"/>
    <property type="evidence" value="ECO:0007669"/>
    <property type="project" value="UniProtKB-UniRule"/>
</dbReference>
<dbReference type="FunFam" id="4.10.410.60:FF:000001">
    <property type="entry name" value="50S ribosomal protein L35"/>
    <property type="match status" value="1"/>
</dbReference>
<dbReference type="Gene3D" id="4.10.410.60">
    <property type="match status" value="1"/>
</dbReference>
<dbReference type="HAMAP" id="MF_00514">
    <property type="entry name" value="Ribosomal_bL35"/>
    <property type="match status" value="1"/>
</dbReference>
<dbReference type="InterPro" id="IPR001706">
    <property type="entry name" value="Ribosomal_bL35"/>
</dbReference>
<dbReference type="InterPro" id="IPR021137">
    <property type="entry name" value="Ribosomal_bL35-like"/>
</dbReference>
<dbReference type="InterPro" id="IPR018265">
    <property type="entry name" value="Ribosomal_bL35_CS"/>
</dbReference>
<dbReference type="InterPro" id="IPR037229">
    <property type="entry name" value="Ribosomal_bL35_sf"/>
</dbReference>
<dbReference type="NCBIfam" id="TIGR00001">
    <property type="entry name" value="rpmI_bact"/>
    <property type="match status" value="1"/>
</dbReference>
<dbReference type="PANTHER" id="PTHR33343">
    <property type="entry name" value="54S RIBOSOMAL PROTEIN BL35M"/>
    <property type="match status" value="1"/>
</dbReference>
<dbReference type="PANTHER" id="PTHR33343:SF1">
    <property type="entry name" value="LARGE RIBOSOMAL SUBUNIT PROTEIN BL35M"/>
    <property type="match status" value="1"/>
</dbReference>
<dbReference type="Pfam" id="PF01632">
    <property type="entry name" value="Ribosomal_L35p"/>
    <property type="match status" value="1"/>
</dbReference>
<dbReference type="PRINTS" id="PR00064">
    <property type="entry name" value="RIBOSOMALL35"/>
</dbReference>
<dbReference type="SUPFAM" id="SSF143034">
    <property type="entry name" value="L35p-like"/>
    <property type="match status" value="1"/>
</dbReference>
<dbReference type="PROSITE" id="PS00936">
    <property type="entry name" value="RIBOSOMAL_L35"/>
    <property type="match status" value="1"/>
</dbReference>
<accession>B5YQ05</accession>
<gene>
    <name evidence="1" type="primary">rpmI</name>
    <name type="ordered locus">ECH74115_2435</name>
</gene>
<name>RL35_ECO5E</name>
<comment type="similarity">
    <text evidence="1">Belongs to the bacterial ribosomal protein bL35 family.</text>
</comment>
<feature type="chain" id="PRO_1000127344" description="Large ribosomal subunit protein bL35">
    <location>
        <begin position="1"/>
        <end position="65"/>
    </location>
</feature>
<feature type="region of interest" description="Disordered" evidence="2">
    <location>
        <begin position="1"/>
        <end position="22"/>
    </location>
</feature>
<feature type="compositionally biased region" description="Basic residues" evidence="2">
    <location>
        <begin position="10"/>
        <end position="22"/>
    </location>
</feature>
<keyword id="KW-0687">Ribonucleoprotein</keyword>
<keyword id="KW-0689">Ribosomal protein</keyword>
<sequence>MPKIKTVRGAAKRFKKTGKGGFKHKHANLRHILTKKATKRKRHLRPKAMVSKGDLGLVIACLPYA</sequence>
<proteinExistence type="inferred from homology"/>
<reference key="1">
    <citation type="journal article" date="2011" name="Proc. Natl. Acad. Sci. U.S.A.">
        <title>Genomic anatomy of Escherichia coli O157:H7 outbreaks.</title>
        <authorList>
            <person name="Eppinger M."/>
            <person name="Mammel M.K."/>
            <person name="Leclerc J.E."/>
            <person name="Ravel J."/>
            <person name="Cebula T.A."/>
        </authorList>
    </citation>
    <scope>NUCLEOTIDE SEQUENCE [LARGE SCALE GENOMIC DNA]</scope>
    <source>
        <strain>EC4115 / EHEC</strain>
    </source>
</reference>